<evidence type="ECO:0000255" key="1">
    <source>
        <dbReference type="HAMAP-Rule" id="MF_00337"/>
    </source>
</evidence>
<name>EX7S_ECOHS</name>
<keyword id="KW-0963">Cytoplasm</keyword>
<keyword id="KW-0269">Exonuclease</keyword>
<keyword id="KW-0378">Hydrolase</keyword>
<keyword id="KW-0540">Nuclease</keyword>
<organism>
    <name type="scientific">Escherichia coli O9:H4 (strain HS)</name>
    <dbReference type="NCBI Taxonomy" id="331112"/>
    <lineage>
        <taxon>Bacteria</taxon>
        <taxon>Pseudomonadati</taxon>
        <taxon>Pseudomonadota</taxon>
        <taxon>Gammaproteobacteria</taxon>
        <taxon>Enterobacterales</taxon>
        <taxon>Enterobacteriaceae</taxon>
        <taxon>Escherichia</taxon>
    </lineage>
</organism>
<feature type="chain" id="PRO_1000059717" description="Exodeoxyribonuclease 7 small subunit">
    <location>
        <begin position="1"/>
        <end position="80"/>
    </location>
</feature>
<comment type="function">
    <text evidence="1">Bidirectionally degrades single-stranded DNA into large acid-insoluble oligonucleotides, which are then degraded further into small acid-soluble oligonucleotides.</text>
</comment>
<comment type="catalytic activity">
    <reaction evidence="1">
        <text>Exonucleolytic cleavage in either 5'- to 3'- or 3'- to 5'-direction to yield nucleoside 5'-phosphates.</text>
        <dbReference type="EC" id="3.1.11.6"/>
    </reaction>
</comment>
<comment type="subunit">
    <text evidence="1">Heterooligomer composed of large and small subunits.</text>
</comment>
<comment type="subcellular location">
    <subcellularLocation>
        <location evidence="1">Cytoplasm</location>
    </subcellularLocation>
</comment>
<comment type="similarity">
    <text evidence="1">Belongs to the XseB family.</text>
</comment>
<proteinExistence type="inferred from homology"/>
<accession>A7ZX74</accession>
<dbReference type="EC" id="3.1.11.6" evidence="1"/>
<dbReference type="EMBL" id="CP000802">
    <property type="protein sequence ID" value="ABV04878.1"/>
    <property type="molecule type" value="Genomic_DNA"/>
</dbReference>
<dbReference type="RefSeq" id="WP_001124935.1">
    <property type="nucleotide sequence ID" value="NC_009800.1"/>
</dbReference>
<dbReference type="SMR" id="A7ZX74"/>
<dbReference type="GeneID" id="75202844"/>
<dbReference type="KEGG" id="ecx:EcHS_A0493"/>
<dbReference type="HOGENOM" id="CLU_145918_3_3_6"/>
<dbReference type="GO" id="GO:0005829">
    <property type="term" value="C:cytosol"/>
    <property type="evidence" value="ECO:0007669"/>
    <property type="project" value="TreeGrafter"/>
</dbReference>
<dbReference type="GO" id="GO:0009318">
    <property type="term" value="C:exodeoxyribonuclease VII complex"/>
    <property type="evidence" value="ECO:0007669"/>
    <property type="project" value="InterPro"/>
</dbReference>
<dbReference type="GO" id="GO:0008855">
    <property type="term" value="F:exodeoxyribonuclease VII activity"/>
    <property type="evidence" value="ECO:0007669"/>
    <property type="project" value="UniProtKB-UniRule"/>
</dbReference>
<dbReference type="GO" id="GO:0006308">
    <property type="term" value="P:DNA catabolic process"/>
    <property type="evidence" value="ECO:0007669"/>
    <property type="project" value="UniProtKB-UniRule"/>
</dbReference>
<dbReference type="FunFam" id="1.10.287.1040:FF:000001">
    <property type="entry name" value="Exodeoxyribonuclease 7 small subunit"/>
    <property type="match status" value="1"/>
</dbReference>
<dbReference type="Gene3D" id="1.10.287.1040">
    <property type="entry name" value="Exonuclease VII, small subunit"/>
    <property type="match status" value="1"/>
</dbReference>
<dbReference type="HAMAP" id="MF_00337">
    <property type="entry name" value="Exonuc_7_S"/>
    <property type="match status" value="1"/>
</dbReference>
<dbReference type="InterPro" id="IPR003761">
    <property type="entry name" value="Exonuc_VII_S"/>
</dbReference>
<dbReference type="InterPro" id="IPR037004">
    <property type="entry name" value="Exonuc_VII_ssu_sf"/>
</dbReference>
<dbReference type="NCBIfam" id="NF002137">
    <property type="entry name" value="PRK00977.1-1"/>
    <property type="match status" value="1"/>
</dbReference>
<dbReference type="NCBIfam" id="NF002140">
    <property type="entry name" value="PRK00977.1-4"/>
    <property type="match status" value="1"/>
</dbReference>
<dbReference type="NCBIfam" id="TIGR01280">
    <property type="entry name" value="xseB"/>
    <property type="match status" value="1"/>
</dbReference>
<dbReference type="PANTHER" id="PTHR34137">
    <property type="entry name" value="EXODEOXYRIBONUCLEASE 7 SMALL SUBUNIT"/>
    <property type="match status" value="1"/>
</dbReference>
<dbReference type="PANTHER" id="PTHR34137:SF1">
    <property type="entry name" value="EXODEOXYRIBONUCLEASE 7 SMALL SUBUNIT"/>
    <property type="match status" value="1"/>
</dbReference>
<dbReference type="Pfam" id="PF02609">
    <property type="entry name" value="Exonuc_VII_S"/>
    <property type="match status" value="1"/>
</dbReference>
<dbReference type="PIRSF" id="PIRSF006488">
    <property type="entry name" value="Exonuc_VII_S"/>
    <property type="match status" value="1"/>
</dbReference>
<dbReference type="SUPFAM" id="SSF116842">
    <property type="entry name" value="XseB-like"/>
    <property type="match status" value="1"/>
</dbReference>
<protein>
    <recommendedName>
        <fullName evidence="1">Exodeoxyribonuclease 7 small subunit</fullName>
        <ecNumber evidence="1">3.1.11.6</ecNumber>
    </recommendedName>
    <alternativeName>
        <fullName evidence="1">Exodeoxyribonuclease VII small subunit</fullName>
        <shortName evidence="1">Exonuclease VII small subunit</shortName>
    </alternativeName>
</protein>
<sequence>MPKKNEAPASFEKALSELEQIVTRLESGDLPLEEALNEFERGVQLARQGQAKLQQAEQRVQILLSDNEDASLTPFTPDNE</sequence>
<gene>
    <name evidence="1" type="primary">xseB</name>
    <name type="ordered locus">EcHS_A0493</name>
</gene>
<reference key="1">
    <citation type="journal article" date="2008" name="J. Bacteriol.">
        <title>The pangenome structure of Escherichia coli: comparative genomic analysis of E. coli commensal and pathogenic isolates.</title>
        <authorList>
            <person name="Rasko D.A."/>
            <person name="Rosovitz M.J."/>
            <person name="Myers G.S.A."/>
            <person name="Mongodin E.F."/>
            <person name="Fricke W.F."/>
            <person name="Gajer P."/>
            <person name="Crabtree J."/>
            <person name="Sebaihia M."/>
            <person name="Thomson N.R."/>
            <person name="Chaudhuri R."/>
            <person name="Henderson I.R."/>
            <person name="Sperandio V."/>
            <person name="Ravel J."/>
        </authorList>
    </citation>
    <scope>NUCLEOTIDE SEQUENCE [LARGE SCALE GENOMIC DNA]</scope>
    <source>
        <strain>HS</strain>
    </source>
</reference>